<accession>Q9GF51</accession>
<reference key="1">
    <citation type="submission" date="1999-04" db="EMBL/GenBank/DDBJ databases">
        <title>Evolutionary analysis of plastidic maturase K and nuclear chalcone synthase and their utility for phylogenetic reconstructions within the Brassicaceae.</title>
        <authorList>
            <person name="Koch M."/>
            <person name="Mitchell-Olds T."/>
        </authorList>
    </citation>
    <scope>NUCLEOTIDE SEQUENCE [GENOMIC DNA]</scope>
</reference>
<comment type="function">
    <text evidence="1">Usually encoded in the trnK tRNA gene intron. Probably assists in splicing its own and other chloroplast group II introns.</text>
</comment>
<comment type="subcellular location">
    <subcellularLocation>
        <location>Plastid</location>
        <location>Chloroplast</location>
    </subcellularLocation>
</comment>
<comment type="similarity">
    <text evidence="1">Belongs to the intron maturase 2 family. MatK subfamily.</text>
</comment>
<dbReference type="EMBL" id="AF144341">
    <property type="protein sequence ID" value="AAG43310.1"/>
    <property type="molecule type" value="Genomic_DNA"/>
</dbReference>
<dbReference type="GO" id="GO:0009507">
    <property type="term" value="C:chloroplast"/>
    <property type="evidence" value="ECO:0007669"/>
    <property type="project" value="UniProtKB-SubCell"/>
</dbReference>
<dbReference type="GO" id="GO:0003723">
    <property type="term" value="F:RNA binding"/>
    <property type="evidence" value="ECO:0007669"/>
    <property type="project" value="UniProtKB-KW"/>
</dbReference>
<dbReference type="GO" id="GO:0006397">
    <property type="term" value="P:mRNA processing"/>
    <property type="evidence" value="ECO:0007669"/>
    <property type="project" value="UniProtKB-KW"/>
</dbReference>
<dbReference type="GO" id="GO:0008380">
    <property type="term" value="P:RNA splicing"/>
    <property type="evidence" value="ECO:0007669"/>
    <property type="project" value="UniProtKB-UniRule"/>
</dbReference>
<dbReference type="GO" id="GO:0008033">
    <property type="term" value="P:tRNA processing"/>
    <property type="evidence" value="ECO:0007669"/>
    <property type="project" value="UniProtKB-KW"/>
</dbReference>
<dbReference type="HAMAP" id="MF_01390">
    <property type="entry name" value="MatK"/>
    <property type="match status" value="1"/>
</dbReference>
<dbReference type="InterPro" id="IPR024937">
    <property type="entry name" value="Domain_X"/>
</dbReference>
<dbReference type="InterPro" id="IPR002866">
    <property type="entry name" value="Maturase_MatK"/>
</dbReference>
<dbReference type="InterPro" id="IPR024942">
    <property type="entry name" value="Maturase_MatK_N"/>
</dbReference>
<dbReference type="PANTHER" id="PTHR34811">
    <property type="entry name" value="MATURASE K"/>
    <property type="match status" value="1"/>
</dbReference>
<dbReference type="PANTHER" id="PTHR34811:SF1">
    <property type="entry name" value="MATURASE K"/>
    <property type="match status" value="1"/>
</dbReference>
<dbReference type="Pfam" id="PF01348">
    <property type="entry name" value="Intron_maturas2"/>
    <property type="match status" value="1"/>
</dbReference>
<dbReference type="Pfam" id="PF01824">
    <property type="entry name" value="MatK_N"/>
    <property type="match status" value="1"/>
</dbReference>
<sequence>MEKFQGYLEFDGARQQSFLYPLFFREYIYVLAYDHGLNRLNRNRSIFLENTDYDKKYSSLIVKRLILRMYEQNRLIIPTKDLNQNSFLGHTSLFYYQMISVLFAVIVEIPFSLRLGSSFQGKQLKKSYNLQSIHSIFPFLEDKLAHFNYVLDVLIPYPIHLEILVQILRYWVKDASSLHFFRFCLYEYCNCKNFYIKKKSILNPRFFLFLYNSHVCEYESIFFFLRKRSSHLRSPSYEVLFERIFFYGKIQHFFKVFINNFPAILGLLKDPFIHYVRYHGRCILATKDTPLLMNKWKYFFVNLWQCYFSVWFQSQKVNINQLSKDNLEFLGYLSSLRLNPLVVRSQMLENSFLIDNVRIKLDSKIPISSIIGSLAKDKFCNVLGHPISKATWTDSSDSDILNRFVRICRNISHYYSGSSKKKNLYRIKYILRLCCVKTLARKHKSTVRAFLKRLGSGLLEEFLTGEDQVLSLIFPRSYYASKRLYRVRIWYLDILYLNDLVNNE</sequence>
<protein>
    <recommendedName>
        <fullName evidence="1">Maturase K</fullName>
    </recommendedName>
    <alternativeName>
        <fullName evidence="1">Intron maturase</fullName>
    </alternativeName>
</protein>
<name>MATK_ARAHA</name>
<geneLocation type="chloroplast"/>
<gene>
    <name evidence="1" type="primary">matK</name>
</gene>
<evidence type="ECO:0000255" key="1">
    <source>
        <dbReference type="HAMAP-Rule" id="MF_01390"/>
    </source>
</evidence>
<proteinExistence type="inferred from homology"/>
<organism>
    <name type="scientific">Arabidopsis halleri</name>
    <dbReference type="NCBI Taxonomy" id="81970"/>
    <lineage>
        <taxon>Eukaryota</taxon>
        <taxon>Viridiplantae</taxon>
        <taxon>Streptophyta</taxon>
        <taxon>Embryophyta</taxon>
        <taxon>Tracheophyta</taxon>
        <taxon>Spermatophyta</taxon>
        <taxon>Magnoliopsida</taxon>
        <taxon>eudicotyledons</taxon>
        <taxon>Gunneridae</taxon>
        <taxon>Pentapetalae</taxon>
        <taxon>rosids</taxon>
        <taxon>malvids</taxon>
        <taxon>Brassicales</taxon>
        <taxon>Brassicaceae</taxon>
        <taxon>Camelineae</taxon>
        <taxon>Arabidopsis</taxon>
    </lineage>
</organism>
<keyword id="KW-0150">Chloroplast</keyword>
<keyword id="KW-0507">mRNA processing</keyword>
<keyword id="KW-0934">Plastid</keyword>
<keyword id="KW-0694">RNA-binding</keyword>
<keyword id="KW-0819">tRNA processing</keyword>
<feature type="chain" id="PRO_0000143243" description="Maturase K">
    <location>
        <begin position="1"/>
        <end position="504"/>
    </location>
</feature>